<proteinExistence type="inferred from homology"/>
<reference key="1">
    <citation type="journal article" date="2003" name="J. Bacteriol.">
        <title>Comparative analyses of the complete genome sequences of Pierce's disease and citrus variegated chlorosis strains of Xylella fastidiosa.</title>
        <authorList>
            <person name="Van Sluys M.A."/>
            <person name="de Oliveira M.C."/>
            <person name="Monteiro-Vitorello C.B."/>
            <person name="Miyaki C.Y."/>
            <person name="Furlan L.R."/>
            <person name="Camargo L.E.A."/>
            <person name="da Silva A.C.R."/>
            <person name="Moon D.H."/>
            <person name="Takita M.A."/>
            <person name="Lemos E.G.M."/>
            <person name="Machado M.A."/>
            <person name="Ferro M.I.T."/>
            <person name="da Silva F.R."/>
            <person name="Goldman M.H.S."/>
            <person name="Goldman G.H."/>
            <person name="Lemos M.V.F."/>
            <person name="El-Dorry H."/>
            <person name="Tsai S.M."/>
            <person name="Carrer H."/>
            <person name="Carraro D.M."/>
            <person name="de Oliveira R.C."/>
            <person name="Nunes L.R."/>
            <person name="Siqueira W.J."/>
            <person name="Coutinho L.L."/>
            <person name="Kimura E.T."/>
            <person name="Ferro E.S."/>
            <person name="Harakava R."/>
            <person name="Kuramae E.E."/>
            <person name="Marino C.L."/>
            <person name="Giglioti E."/>
            <person name="Abreu I.L."/>
            <person name="Alves L.M.C."/>
            <person name="do Amaral A.M."/>
            <person name="Baia G.S."/>
            <person name="Blanco S.R."/>
            <person name="Brito M.S."/>
            <person name="Cannavan F.S."/>
            <person name="Celestino A.V."/>
            <person name="da Cunha A.F."/>
            <person name="Fenille R.C."/>
            <person name="Ferro J.A."/>
            <person name="Formighieri E.F."/>
            <person name="Kishi L.T."/>
            <person name="Leoni S.G."/>
            <person name="Oliveira A.R."/>
            <person name="Rosa V.E. Jr."/>
            <person name="Sassaki F.T."/>
            <person name="Sena J.A.D."/>
            <person name="de Souza A.A."/>
            <person name="Truffi D."/>
            <person name="Tsukumo F."/>
            <person name="Yanai G.M."/>
            <person name="Zaros L.G."/>
            <person name="Civerolo E.L."/>
            <person name="Simpson A.J.G."/>
            <person name="Almeida N.F. Jr."/>
            <person name="Setubal J.C."/>
            <person name="Kitajima J.P."/>
        </authorList>
    </citation>
    <scope>NUCLEOTIDE SEQUENCE [LARGE SCALE GENOMIC DNA]</scope>
    <source>
        <strain>Temecula1 / ATCC 700964</strain>
    </source>
</reference>
<evidence type="ECO:0000250" key="1">
    <source>
        <dbReference type="UniProtKB" id="P33644"/>
    </source>
</evidence>
<evidence type="ECO:0000250" key="2">
    <source>
        <dbReference type="UniProtKB" id="P84138"/>
    </source>
</evidence>
<evidence type="ECO:0000250" key="3">
    <source>
        <dbReference type="UniProtKB" id="Q1EIR0"/>
    </source>
</evidence>
<evidence type="ECO:0000305" key="4"/>
<accession>Q87AR8</accession>
<comment type="function">
    <text evidence="2">Purine nucleoside enzyme that catalyzes the phosphorolysis of adenosine and inosine nucleosides, yielding D-ribose 1-phosphate and the respective free bases, adenine and hypoxanthine. Also catalyzes the phosphorolysis of S-methyl-5'-thioadenosine into adenine and S-methyl-5-thio-alpha-D-ribose 1-phosphate. Also has adenosine deaminase activity.</text>
</comment>
<comment type="catalytic activity">
    <reaction evidence="2">
        <text>adenosine + phosphate = alpha-D-ribose 1-phosphate + adenine</text>
        <dbReference type="Rhea" id="RHEA:27642"/>
        <dbReference type="ChEBI" id="CHEBI:16335"/>
        <dbReference type="ChEBI" id="CHEBI:16708"/>
        <dbReference type="ChEBI" id="CHEBI:43474"/>
        <dbReference type="ChEBI" id="CHEBI:57720"/>
        <dbReference type="EC" id="2.4.2.1"/>
    </reaction>
    <physiologicalReaction direction="left-to-right" evidence="2">
        <dbReference type="Rhea" id="RHEA:27643"/>
    </physiologicalReaction>
</comment>
<comment type="catalytic activity">
    <reaction evidence="2">
        <text>S-methyl-5'-thioadenosine + phosphate = 5-(methylsulfanyl)-alpha-D-ribose 1-phosphate + adenine</text>
        <dbReference type="Rhea" id="RHEA:11852"/>
        <dbReference type="ChEBI" id="CHEBI:16708"/>
        <dbReference type="ChEBI" id="CHEBI:17509"/>
        <dbReference type="ChEBI" id="CHEBI:43474"/>
        <dbReference type="ChEBI" id="CHEBI:58533"/>
        <dbReference type="EC" id="2.4.2.28"/>
    </reaction>
    <physiologicalReaction direction="left-to-right" evidence="2">
        <dbReference type="Rhea" id="RHEA:11853"/>
    </physiologicalReaction>
</comment>
<comment type="catalytic activity">
    <reaction evidence="2">
        <text>inosine + phosphate = alpha-D-ribose 1-phosphate + hypoxanthine</text>
        <dbReference type="Rhea" id="RHEA:27646"/>
        <dbReference type="ChEBI" id="CHEBI:17368"/>
        <dbReference type="ChEBI" id="CHEBI:17596"/>
        <dbReference type="ChEBI" id="CHEBI:43474"/>
        <dbReference type="ChEBI" id="CHEBI:57720"/>
        <dbReference type="EC" id="2.4.2.1"/>
    </reaction>
    <physiologicalReaction direction="left-to-right" evidence="2">
        <dbReference type="Rhea" id="RHEA:27647"/>
    </physiologicalReaction>
</comment>
<comment type="catalytic activity">
    <reaction evidence="2">
        <text>adenosine + H2O + H(+) = inosine + NH4(+)</text>
        <dbReference type="Rhea" id="RHEA:24408"/>
        <dbReference type="ChEBI" id="CHEBI:15377"/>
        <dbReference type="ChEBI" id="CHEBI:15378"/>
        <dbReference type="ChEBI" id="CHEBI:16335"/>
        <dbReference type="ChEBI" id="CHEBI:17596"/>
        <dbReference type="ChEBI" id="CHEBI:28938"/>
        <dbReference type="EC" id="3.5.4.4"/>
    </reaction>
    <physiologicalReaction direction="left-to-right" evidence="2">
        <dbReference type="Rhea" id="RHEA:24409"/>
    </physiologicalReaction>
</comment>
<comment type="cofactor">
    <cofactor evidence="1">
        <name>Cu(2+)</name>
        <dbReference type="ChEBI" id="CHEBI:29036"/>
    </cofactor>
    <cofactor evidence="2">
        <name>Zn(2+)</name>
        <dbReference type="ChEBI" id="CHEBI:29105"/>
    </cofactor>
</comment>
<comment type="subunit">
    <text evidence="3">Homodimer.</text>
</comment>
<comment type="similarity">
    <text evidence="4">Belongs to the purine nucleoside phosphorylase YfiH/LACC1 family.</text>
</comment>
<name>PURNU_XYLFT</name>
<keyword id="KW-0186">Copper</keyword>
<keyword id="KW-0378">Hydrolase</keyword>
<keyword id="KW-0479">Metal-binding</keyword>
<keyword id="KW-0560">Oxidoreductase</keyword>
<keyword id="KW-1185">Reference proteome</keyword>
<keyword id="KW-0808">Transferase</keyword>
<keyword id="KW-0862">Zinc</keyword>
<gene>
    <name type="ordered locus">PD_1754</name>
</gene>
<protein>
    <recommendedName>
        <fullName>Purine nucleoside phosphorylase PD_1754</fullName>
        <ecNumber evidence="2">2.4.2.1</ecNumber>
    </recommendedName>
    <alternativeName>
        <fullName>Adenosine deaminase PD_1754</fullName>
        <ecNumber evidence="2">3.5.4.4</ecNumber>
    </alternativeName>
    <alternativeName>
        <fullName>S-methyl-5'-thioadenosine phosphorylase PD_1754</fullName>
        <ecNumber evidence="2">2.4.2.28</ecNumber>
    </alternativeName>
</protein>
<sequence length="260" mass="27664">MGKFPSWVLVADWPPPPGVMALSTLRDGPGVSVAPFDRLNLGNCSGVAGDAPVCVERNRSRLVQMLGLPSVPHWLRQVHGVEVLRVDVLPQSIARVVEPTADAAVTSVAGAVLVILTADCLPVVLAAVDGSEIGVVHAGWRGLADDVLERTVAALRTSPECLQAWLGPAAGPQAYEVGVDVYAAFVERDSGAACAFSVTRPGHWYVDLYALARQRLMRAGLSAVSIYGGGLCTISDPQRFFSHRRDRRSGRFATLAWIGC</sequence>
<feature type="chain" id="PRO_0000163186" description="Purine nucleoside phosphorylase PD_1754">
    <location>
        <begin position="1"/>
        <end position="260"/>
    </location>
</feature>
<feature type="binding site" evidence="2">
    <location>
        <position position="79"/>
    </location>
    <ligand>
        <name>Zn(2+)</name>
        <dbReference type="ChEBI" id="CHEBI:29105"/>
        <note>catalytic</note>
    </ligand>
</feature>
<feature type="binding site" evidence="2">
    <location>
        <position position="120"/>
    </location>
    <ligand>
        <name>Zn(2+)</name>
        <dbReference type="ChEBI" id="CHEBI:29105"/>
        <note>catalytic</note>
    </ligand>
</feature>
<feature type="binding site" evidence="2">
    <location>
        <position position="137"/>
    </location>
    <ligand>
        <name>Zn(2+)</name>
        <dbReference type="ChEBI" id="CHEBI:29105"/>
        <note>catalytic</note>
    </ligand>
</feature>
<dbReference type="EC" id="2.4.2.1" evidence="2"/>
<dbReference type="EC" id="3.5.4.4" evidence="2"/>
<dbReference type="EC" id="2.4.2.28" evidence="2"/>
<dbReference type="EMBL" id="AE009442">
    <property type="protein sequence ID" value="AAO29588.1"/>
    <property type="molecule type" value="Genomic_DNA"/>
</dbReference>
<dbReference type="SMR" id="Q87AR8"/>
<dbReference type="KEGG" id="xft:PD_1754"/>
<dbReference type="HOGENOM" id="CLU_065784_1_1_6"/>
<dbReference type="Proteomes" id="UP000002516">
    <property type="component" value="Chromosome"/>
</dbReference>
<dbReference type="GO" id="GO:0004000">
    <property type="term" value="F:adenosine deaminase activity"/>
    <property type="evidence" value="ECO:0007669"/>
    <property type="project" value="RHEA"/>
</dbReference>
<dbReference type="GO" id="GO:0005507">
    <property type="term" value="F:copper ion binding"/>
    <property type="evidence" value="ECO:0007669"/>
    <property type="project" value="TreeGrafter"/>
</dbReference>
<dbReference type="GO" id="GO:0016491">
    <property type="term" value="F:oxidoreductase activity"/>
    <property type="evidence" value="ECO:0007669"/>
    <property type="project" value="UniProtKB-KW"/>
</dbReference>
<dbReference type="GO" id="GO:0017061">
    <property type="term" value="F:S-methyl-5-thioadenosine phosphorylase activity"/>
    <property type="evidence" value="ECO:0007669"/>
    <property type="project" value="UniProtKB-EC"/>
</dbReference>
<dbReference type="CDD" id="cd16833">
    <property type="entry name" value="YfiH"/>
    <property type="match status" value="1"/>
</dbReference>
<dbReference type="Gene3D" id="3.60.140.10">
    <property type="entry name" value="CNF1/YfiH-like putative cysteine hydrolases"/>
    <property type="match status" value="1"/>
</dbReference>
<dbReference type="InterPro" id="IPR003730">
    <property type="entry name" value="Cu_polyphenol_OxRdtase"/>
</dbReference>
<dbReference type="InterPro" id="IPR038371">
    <property type="entry name" value="Cu_polyphenol_OxRdtase_sf"/>
</dbReference>
<dbReference type="InterPro" id="IPR011324">
    <property type="entry name" value="Cytotoxic_necrot_fac-like_cat"/>
</dbReference>
<dbReference type="NCBIfam" id="TIGR00726">
    <property type="entry name" value="peptidoglycan editing factor PgeF"/>
    <property type="match status" value="1"/>
</dbReference>
<dbReference type="PANTHER" id="PTHR30616:SF2">
    <property type="entry name" value="PURINE NUCLEOSIDE PHOSPHORYLASE LACC1"/>
    <property type="match status" value="1"/>
</dbReference>
<dbReference type="PANTHER" id="PTHR30616">
    <property type="entry name" value="UNCHARACTERIZED PROTEIN YFIH"/>
    <property type="match status" value="1"/>
</dbReference>
<dbReference type="Pfam" id="PF02578">
    <property type="entry name" value="Cu-oxidase_4"/>
    <property type="match status" value="1"/>
</dbReference>
<dbReference type="SUPFAM" id="SSF64438">
    <property type="entry name" value="CNF1/YfiH-like putative cysteine hydrolases"/>
    <property type="match status" value="1"/>
</dbReference>
<organism>
    <name type="scientific">Xylella fastidiosa (strain Temecula1 / ATCC 700964)</name>
    <dbReference type="NCBI Taxonomy" id="183190"/>
    <lineage>
        <taxon>Bacteria</taxon>
        <taxon>Pseudomonadati</taxon>
        <taxon>Pseudomonadota</taxon>
        <taxon>Gammaproteobacteria</taxon>
        <taxon>Lysobacterales</taxon>
        <taxon>Lysobacteraceae</taxon>
        <taxon>Xylella</taxon>
    </lineage>
</organism>